<comment type="catalytic activity">
    <reaction evidence="2">
        <text>D-glyceraldehyde 3-phosphate + phosphate + NAD(+) = (2R)-3-phospho-glyceroyl phosphate + NADH + H(+)</text>
        <dbReference type="Rhea" id="RHEA:10300"/>
        <dbReference type="ChEBI" id="CHEBI:15378"/>
        <dbReference type="ChEBI" id="CHEBI:43474"/>
        <dbReference type="ChEBI" id="CHEBI:57540"/>
        <dbReference type="ChEBI" id="CHEBI:57604"/>
        <dbReference type="ChEBI" id="CHEBI:57945"/>
        <dbReference type="ChEBI" id="CHEBI:59776"/>
        <dbReference type="EC" id="1.2.1.12"/>
    </reaction>
</comment>
<comment type="pathway">
    <text>Carbohydrate degradation; glycolysis; pyruvate from D-glyceraldehyde 3-phosphate: step 1/5.</text>
</comment>
<comment type="subunit">
    <text>Homotetramer.</text>
</comment>
<comment type="subcellular location">
    <subcellularLocation>
        <location>Cytoplasm</location>
    </subcellularLocation>
</comment>
<comment type="similarity">
    <text evidence="3">Belongs to the glyceraldehyde-3-phosphate dehydrogenase family.</text>
</comment>
<accession>P09317</accession>
<accession>A0A0D1E1I2</accession>
<accession>Q4PBM2</accession>
<evidence type="ECO:0000250" key="1"/>
<evidence type="ECO:0000255" key="2">
    <source>
        <dbReference type="PROSITE-ProRule" id="PRU10009"/>
    </source>
</evidence>
<evidence type="ECO:0000305" key="3"/>
<organism>
    <name type="scientific">Mycosarcoma maydis</name>
    <name type="common">Corn smut fungus</name>
    <name type="synonym">Ustilago maydis</name>
    <dbReference type="NCBI Taxonomy" id="5270"/>
    <lineage>
        <taxon>Eukaryota</taxon>
        <taxon>Fungi</taxon>
        <taxon>Dikarya</taxon>
        <taxon>Basidiomycota</taxon>
        <taxon>Ustilaginomycotina</taxon>
        <taxon>Ustilaginomycetes</taxon>
        <taxon>Ustilaginales</taxon>
        <taxon>Ustilaginaceae</taxon>
        <taxon>Mycosarcoma</taxon>
    </lineage>
</organism>
<dbReference type="EC" id="1.2.1.12"/>
<dbReference type="EMBL" id="X07879">
    <property type="protein sequence ID" value="CAA30726.1"/>
    <property type="molecule type" value="Genomic_DNA"/>
</dbReference>
<dbReference type="EMBL" id="CM003144">
    <property type="protein sequence ID" value="KIS69979.1"/>
    <property type="molecule type" value="Genomic_DNA"/>
</dbReference>
<dbReference type="PIR" id="JN0096">
    <property type="entry name" value="DEUSGM"/>
</dbReference>
<dbReference type="RefSeq" id="XP_011388767.1">
    <property type="nucleotide sequence ID" value="XM_011390465.1"/>
</dbReference>
<dbReference type="SMR" id="P09317"/>
<dbReference type="FunCoup" id="P09317">
    <property type="interactions" value="283"/>
</dbReference>
<dbReference type="STRING" id="237631.P09317"/>
<dbReference type="EnsemblFungi" id="KIS69979">
    <property type="protein sequence ID" value="KIS69979"/>
    <property type="gene ID" value="UMAG_02491"/>
</dbReference>
<dbReference type="GeneID" id="23563225"/>
<dbReference type="KEGG" id="uma:UMAG_02491"/>
<dbReference type="VEuPathDB" id="FungiDB:UMAG_02491"/>
<dbReference type="eggNOG" id="KOG0657">
    <property type="taxonomic scope" value="Eukaryota"/>
</dbReference>
<dbReference type="HOGENOM" id="CLU_030140_0_3_1"/>
<dbReference type="InParanoid" id="P09317"/>
<dbReference type="OMA" id="YGYTCNM"/>
<dbReference type="OrthoDB" id="1152826at2759"/>
<dbReference type="SABIO-RK" id="P09317"/>
<dbReference type="UniPathway" id="UPA00109">
    <property type="reaction ID" value="UER00184"/>
</dbReference>
<dbReference type="Proteomes" id="UP000000561">
    <property type="component" value="Chromosome 5"/>
</dbReference>
<dbReference type="GO" id="GO:0005829">
    <property type="term" value="C:cytosol"/>
    <property type="evidence" value="ECO:0000318"/>
    <property type="project" value="GO_Central"/>
</dbReference>
<dbReference type="GO" id="GO:0004365">
    <property type="term" value="F:glyceraldehyde-3-phosphate dehydrogenase (NAD+) (phosphorylating) activity"/>
    <property type="evidence" value="ECO:0000318"/>
    <property type="project" value="GO_Central"/>
</dbReference>
<dbReference type="GO" id="GO:0051287">
    <property type="term" value="F:NAD binding"/>
    <property type="evidence" value="ECO:0007669"/>
    <property type="project" value="InterPro"/>
</dbReference>
<dbReference type="GO" id="GO:0050661">
    <property type="term" value="F:NADP binding"/>
    <property type="evidence" value="ECO:0007669"/>
    <property type="project" value="InterPro"/>
</dbReference>
<dbReference type="GO" id="GO:0006006">
    <property type="term" value="P:glucose metabolic process"/>
    <property type="evidence" value="ECO:0007669"/>
    <property type="project" value="InterPro"/>
</dbReference>
<dbReference type="GO" id="GO:0006096">
    <property type="term" value="P:glycolytic process"/>
    <property type="evidence" value="ECO:0000318"/>
    <property type="project" value="GO_Central"/>
</dbReference>
<dbReference type="CDD" id="cd18126">
    <property type="entry name" value="GAPDH_I_C"/>
    <property type="match status" value="1"/>
</dbReference>
<dbReference type="CDD" id="cd05214">
    <property type="entry name" value="GAPDH_I_N"/>
    <property type="match status" value="1"/>
</dbReference>
<dbReference type="FunFam" id="3.30.360.10:FF:000001">
    <property type="entry name" value="Glyceraldehyde-3-phosphate dehydrogenase"/>
    <property type="match status" value="1"/>
</dbReference>
<dbReference type="FunFam" id="3.40.50.720:FF:000266">
    <property type="entry name" value="Glyceraldehyde-3-phosphate dehydrogenase"/>
    <property type="match status" value="1"/>
</dbReference>
<dbReference type="Gene3D" id="3.30.360.10">
    <property type="entry name" value="Dihydrodipicolinate Reductase, domain 2"/>
    <property type="match status" value="1"/>
</dbReference>
<dbReference type="Gene3D" id="3.40.50.720">
    <property type="entry name" value="NAD(P)-binding Rossmann-like Domain"/>
    <property type="match status" value="1"/>
</dbReference>
<dbReference type="InterPro" id="IPR020831">
    <property type="entry name" value="GlycerAld/Erythrose_P_DH"/>
</dbReference>
<dbReference type="InterPro" id="IPR020830">
    <property type="entry name" value="GlycerAld_3-P_DH_AS"/>
</dbReference>
<dbReference type="InterPro" id="IPR020829">
    <property type="entry name" value="GlycerAld_3-P_DH_cat"/>
</dbReference>
<dbReference type="InterPro" id="IPR020828">
    <property type="entry name" value="GlycerAld_3-P_DH_NAD(P)-bd"/>
</dbReference>
<dbReference type="InterPro" id="IPR006424">
    <property type="entry name" value="Glyceraldehyde-3-P_DH_1"/>
</dbReference>
<dbReference type="InterPro" id="IPR036291">
    <property type="entry name" value="NAD(P)-bd_dom_sf"/>
</dbReference>
<dbReference type="NCBIfam" id="TIGR01534">
    <property type="entry name" value="GAPDH-I"/>
    <property type="match status" value="1"/>
</dbReference>
<dbReference type="PANTHER" id="PTHR10836">
    <property type="entry name" value="GLYCERALDEHYDE 3-PHOSPHATE DEHYDROGENASE"/>
    <property type="match status" value="1"/>
</dbReference>
<dbReference type="PANTHER" id="PTHR10836:SF76">
    <property type="entry name" value="GLYCERALDEHYDE-3-PHOSPHATE DEHYDROGENASE-RELATED"/>
    <property type="match status" value="1"/>
</dbReference>
<dbReference type="Pfam" id="PF02800">
    <property type="entry name" value="Gp_dh_C"/>
    <property type="match status" value="1"/>
</dbReference>
<dbReference type="Pfam" id="PF00044">
    <property type="entry name" value="Gp_dh_N"/>
    <property type="match status" value="1"/>
</dbReference>
<dbReference type="PIRSF" id="PIRSF000149">
    <property type="entry name" value="GAP_DH"/>
    <property type="match status" value="1"/>
</dbReference>
<dbReference type="PRINTS" id="PR00078">
    <property type="entry name" value="G3PDHDRGNASE"/>
</dbReference>
<dbReference type="SMART" id="SM00846">
    <property type="entry name" value="Gp_dh_N"/>
    <property type="match status" value="1"/>
</dbReference>
<dbReference type="SUPFAM" id="SSF55347">
    <property type="entry name" value="Glyceraldehyde-3-phosphate dehydrogenase-like, C-terminal domain"/>
    <property type="match status" value="1"/>
</dbReference>
<dbReference type="SUPFAM" id="SSF51735">
    <property type="entry name" value="NAD(P)-binding Rossmann-fold domains"/>
    <property type="match status" value="1"/>
</dbReference>
<dbReference type="PROSITE" id="PS00071">
    <property type="entry name" value="GAPDH"/>
    <property type="match status" value="1"/>
</dbReference>
<feature type="chain" id="PRO_0000145587" description="Glyceraldehyde-3-phosphate dehydrogenase">
    <location>
        <begin position="1"/>
        <end position="337"/>
    </location>
</feature>
<feature type="active site" description="Nucleophile" evidence="2">
    <location>
        <position position="152"/>
    </location>
</feature>
<feature type="binding site" evidence="1">
    <location>
        <begin position="13"/>
        <end position="14"/>
    </location>
    <ligand>
        <name>NAD(+)</name>
        <dbReference type="ChEBI" id="CHEBI:57540"/>
    </ligand>
</feature>
<feature type="binding site" evidence="1">
    <location>
        <position position="35"/>
    </location>
    <ligand>
        <name>NAD(+)</name>
        <dbReference type="ChEBI" id="CHEBI:57540"/>
    </ligand>
</feature>
<feature type="binding site" evidence="1">
    <location>
        <position position="80"/>
    </location>
    <ligand>
        <name>NAD(+)</name>
        <dbReference type="ChEBI" id="CHEBI:57540"/>
    </ligand>
</feature>
<feature type="binding site" evidence="1">
    <location>
        <begin position="151"/>
        <end position="153"/>
    </location>
    <ligand>
        <name>D-glyceraldehyde 3-phosphate</name>
        <dbReference type="ChEBI" id="CHEBI:59776"/>
    </ligand>
</feature>
<feature type="binding site" evidence="1">
    <location>
        <position position="182"/>
    </location>
    <ligand>
        <name>D-glyceraldehyde 3-phosphate</name>
        <dbReference type="ChEBI" id="CHEBI:59776"/>
    </ligand>
</feature>
<feature type="binding site" evidence="1">
    <location>
        <begin position="211"/>
        <end position="212"/>
    </location>
    <ligand>
        <name>D-glyceraldehyde 3-phosphate</name>
        <dbReference type="ChEBI" id="CHEBI:59776"/>
    </ligand>
</feature>
<feature type="binding site" evidence="1">
    <location>
        <position position="234"/>
    </location>
    <ligand>
        <name>D-glyceraldehyde 3-phosphate</name>
        <dbReference type="ChEBI" id="CHEBI:59776"/>
    </ligand>
</feature>
<feature type="binding site" evidence="1">
    <location>
        <position position="316"/>
    </location>
    <ligand>
        <name>NAD(+)</name>
        <dbReference type="ChEBI" id="CHEBI:57540"/>
    </ligand>
</feature>
<feature type="site" description="Activates thiol group during catalysis" evidence="1">
    <location>
        <position position="179"/>
    </location>
</feature>
<feature type="sequence conflict" description="In Ref. 1; CAA30726." evidence="3" ref="1">
    <original>A</original>
    <variation>R</variation>
    <location>
        <position position="216"/>
    </location>
</feature>
<reference key="1">
    <citation type="journal article" date="1990" name="Gene">
        <title>Isolation and characterization of a Ustilago maydis glyceraldehyde-3-phosphate dehydrogenase-encoding gene.</title>
        <authorList>
            <person name="Smith T.L."/>
            <person name="Leong S.A."/>
        </authorList>
    </citation>
    <scope>NUCLEOTIDE SEQUENCE [GENOMIC DNA]</scope>
    <source>
        <strain>518</strain>
    </source>
</reference>
<reference key="2">
    <citation type="journal article" date="2006" name="Nature">
        <title>Insights from the genome of the biotrophic fungal plant pathogen Ustilago maydis.</title>
        <authorList>
            <person name="Kaemper J."/>
            <person name="Kahmann R."/>
            <person name="Boelker M."/>
            <person name="Ma L.-J."/>
            <person name="Brefort T."/>
            <person name="Saville B.J."/>
            <person name="Banuett F."/>
            <person name="Kronstad J.W."/>
            <person name="Gold S.E."/>
            <person name="Mueller O."/>
            <person name="Perlin M.H."/>
            <person name="Woesten H.A.B."/>
            <person name="de Vries R."/>
            <person name="Ruiz-Herrera J."/>
            <person name="Reynaga-Pena C.G."/>
            <person name="Snetselaar K."/>
            <person name="McCann M."/>
            <person name="Perez-Martin J."/>
            <person name="Feldbruegge M."/>
            <person name="Basse C.W."/>
            <person name="Steinberg G."/>
            <person name="Ibeas J.I."/>
            <person name="Holloman W."/>
            <person name="Guzman P."/>
            <person name="Farman M.L."/>
            <person name="Stajich J.E."/>
            <person name="Sentandreu R."/>
            <person name="Gonzalez-Prieto J.M."/>
            <person name="Kennell J.C."/>
            <person name="Molina L."/>
            <person name="Schirawski J."/>
            <person name="Mendoza-Mendoza A."/>
            <person name="Greilinger D."/>
            <person name="Muench K."/>
            <person name="Roessel N."/>
            <person name="Scherer M."/>
            <person name="Vranes M."/>
            <person name="Ladendorf O."/>
            <person name="Vincon V."/>
            <person name="Fuchs U."/>
            <person name="Sandrock B."/>
            <person name="Meng S."/>
            <person name="Ho E.C.H."/>
            <person name="Cahill M.J."/>
            <person name="Boyce K.J."/>
            <person name="Klose J."/>
            <person name="Klosterman S.J."/>
            <person name="Deelstra H.J."/>
            <person name="Ortiz-Castellanos L."/>
            <person name="Li W."/>
            <person name="Sanchez-Alonso P."/>
            <person name="Schreier P.H."/>
            <person name="Haeuser-Hahn I."/>
            <person name="Vaupel M."/>
            <person name="Koopmann E."/>
            <person name="Friedrich G."/>
            <person name="Voss H."/>
            <person name="Schlueter T."/>
            <person name="Margolis J."/>
            <person name="Platt D."/>
            <person name="Swimmer C."/>
            <person name="Gnirke A."/>
            <person name="Chen F."/>
            <person name="Vysotskaia V."/>
            <person name="Mannhaupt G."/>
            <person name="Gueldener U."/>
            <person name="Muensterkoetter M."/>
            <person name="Haase D."/>
            <person name="Oesterheld M."/>
            <person name="Mewes H.-W."/>
            <person name="Mauceli E.W."/>
            <person name="DeCaprio D."/>
            <person name="Wade C.M."/>
            <person name="Butler J."/>
            <person name="Young S.K."/>
            <person name="Jaffe D.B."/>
            <person name="Calvo S.E."/>
            <person name="Nusbaum C."/>
            <person name="Galagan J.E."/>
            <person name="Birren B.W."/>
        </authorList>
    </citation>
    <scope>NUCLEOTIDE SEQUENCE [LARGE SCALE GENOMIC DNA]</scope>
    <source>
        <strain>DSM 14603 / FGSC 9021 / UM521</strain>
    </source>
</reference>
<reference key="3">
    <citation type="submission" date="2014-09" db="EMBL/GenBank/DDBJ databases">
        <authorList>
            <person name="Gueldener U."/>
            <person name="Muensterkoetter M."/>
            <person name="Walter M.C."/>
            <person name="Mannhaupt G."/>
            <person name="Kahmann R."/>
        </authorList>
    </citation>
    <scope>GENOME REANNOTATION</scope>
    <source>
        <strain>DSM 14603 / FGSC 9021 / UM521</strain>
    </source>
</reference>
<protein>
    <recommendedName>
        <fullName>Glyceraldehyde-3-phosphate dehydrogenase</fullName>
        <shortName>GAPDH</shortName>
        <ecNumber>1.2.1.12</ecNumber>
    </recommendedName>
</protein>
<proteinExistence type="inferred from homology"/>
<keyword id="KW-0963">Cytoplasm</keyword>
<keyword id="KW-0324">Glycolysis</keyword>
<keyword id="KW-0520">NAD</keyword>
<keyword id="KW-0560">Oxidoreductase</keyword>
<keyword id="KW-1185">Reference proteome</keyword>
<gene>
    <name type="primary">GAPD</name>
    <name type="ORF">UMAG_02491</name>
</gene>
<sequence length="337" mass="35828">MSQVNIGINGFGRIGRIVFRNSVVHNTANVVAINDPFIDLEYMVYMLKYDSTHGVFNGDISTKDGKLIVNGKSIAVFAEKDPSNIPWGQAGAHYVVESTGVFTTIDKASAHIKGGAKKVVISAPSADAPMYVCGVNLDAYDPKAQVVSNASCTTNCLAPLAKVIHDKFGIVEGLMTTVHATTATQKTVDGPSAKDWRGGRAAAANIIPSSTGAAKAVGKVIPSLNGKLTGMAFRVPTTNVSVVDLTARLEKGASYDEIKAEVKRASENELKGILGYTEDAVVSQDFIGNSHSSIFDAAAGISLNNNFVKLVSWYDNEWGYSNRCLDLLVFMAQKDSA</sequence>
<name>G3P_MYCMD</name>